<proteinExistence type="inferred from homology"/>
<protein>
    <recommendedName>
        <fullName evidence="1">O-phospho-L-seryl-tRNA:Cys-tRNA synthase</fullName>
        <ecNumber evidence="1">2.5.1.73</ecNumber>
    </recommendedName>
    <alternativeName>
        <fullName evidence="1">Sep-tRNA:Cys-tRNA synthase</fullName>
        <shortName evidence="1">SepCysS</shortName>
    </alternativeName>
</protein>
<dbReference type="EC" id="2.5.1.73" evidence="1"/>
<dbReference type="EMBL" id="AE009439">
    <property type="protein sequence ID" value="AAM01446.1"/>
    <property type="molecule type" value="Genomic_DNA"/>
</dbReference>
<dbReference type="RefSeq" id="WP_011018601.1">
    <property type="nucleotide sequence ID" value="NC_003551.1"/>
</dbReference>
<dbReference type="SMR" id="Q8TYR3"/>
<dbReference type="FunCoup" id="Q8TYR3">
    <property type="interactions" value="27"/>
</dbReference>
<dbReference type="STRING" id="190192.MK0229"/>
<dbReference type="PaxDb" id="190192-MK0229"/>
<dbReference type="EnsemblBacteria" id="AAM01446">
    <property type="protein sequence ID" value="AAM01446"/>
    <property type="gene ID" value="MK0229"/>
</dbReference>
<dbReference type="GeneID" id="1477532"/>
<dbReference type="KEGG" id="mka:MK0229"/>
<dbReference type="PATRIC" id="fig|190192.8.peg.230"/>
<dbReference type="HOGENOM" id="CLU_060476_0_0_2"/>
<dbReference type="InParanoid" id="Q8TYR3"/>
<dbReference type="OrthoDB" id="5817at2157"/>
<dbReference type="Proteomes" id="UP000001826">
    <property type="component" value="Chromosome"/>
</dbReference>
<dbReference type="GO" id="GO:0043766">
    <property type="term" value="F:Sep-tRNA:Cys-tRNA synthase activity"/>
    <property type="evidence" value="ECO:0007669"/>
    <property type="project" value="UniProtKB-UniRule"/>
</dbReference>
<dbReference type="GO" id="GO:0006412">
    <property type="term" value="P:translation"/>
    <property type="evidence" value="ECO:0007669"/>
    <property type="project" value="UniProtKB-KW"/>
</dbReference>
<dbReference type="CDD" id="cd06452">
    <property type="entry name" value="SepCysS"/>
    <property type="match status" value="1"/>
</dbReference>
<dbReference type="Gene3D" id="3.90.1150.10">
    <property type="entry name" value="Aspartate Aminotransferase, domain 1"/>
    <property type="match status" value="1"/>
</dbReference>
<dbReference type="Gene3D" id="3.40.640.10">
    <property type="entry name" value="Type I PLP-dependent aspartate aminotransferase-like (Major domain)"/>
    <property type="match status" value="1"/>
</dbReference>
<dbReference type="HAMAP" id="MF_01675">
    <property type="entry name" value="Sep_Cys_tRNA_synth"/>
    <property type="match status" value="1"/>
</dbReference>
<dbReference type="InterPro" id="IPR015424">
    <property type="entry name" value="PyrdxlP-dep_Trfase"/>
</dbReference>
<dbReference type="InterPro" id="IPR015421">
    <property type="entry name" value="PyrdxlP-dep_Trfase_major"/>
</dbReference>
<dbReference type="InterPro" id="IPR015422">
    <property type="entry name" value="PyrdxlP-dep_Trfase_small"/>
</dbReference>
<dbReference type="InterPro" id="IPR013375">
    <property type="entry name" value="Sep_Cys-tRNA_synth_arc"/>
</dbReference>
<dbReference type="InterPro" id="IPR008829">
    <property type="entry name" value="SepSecS/SepCysS"/>
</dbReference>
<dbReference type="NCBIfam" id="NF006810">
    <property type="entry name" value="PRK09331.1"/>
    <property type="match status" value="1"/>
</dbReference>
<dbReference type="NCBIfam" id="TIGR02539">
    <property type="entry name" value="SepCysS"/>
    <property type="match status" value="1"/>
</dbReference>
<dbReference type="PANTHER" id="PTHR43586">
    <property type="entry name" value="CYSTEINE DESULFURASE"/>
    <property type="match status" value="1"/>
</dbReference>
<dbReference type="PANTHER" id="PTHR43586:SF3">
    <property type="entry name" value="O-PHOSPHO-L-SERYL-TRNA:CYS-TRNA SYNTHASE"/>
    <property type="match status" value="1"/>
</dbReference>
<dbReference type="Pfam" id="PF05889">
    <property type="entry name" value="SepSecS"/>
    <property type="match status" value="1"/>
</dbReference>
<dbReference type="SUPFAM" id="SSF53383">
    <property type="entry name" value="PLP-dependent transferases"/>
    <property type="match status" value="1"/>
</dbReference>
<comment type="function">
    <text evidence="1">Converts O-phospho-L-seryl-tRNA(Cys) (Sep-tRNA(Cys)) to L-cysteinyl-tRNA(Cys) (Cys-tRNA(Cys)).</text>
</comment>
<comment type="catalytic activity">
    <reaction evidence="1">
        <text>O-phospho-L-seryl-tRNA(Cys) + hydrogen sulfide + H(+) = L-cysteinyl-tRNA(Cys) + phosphate</text>
        <dbReference type="Rhea" id="RHEA:25686"/>
        <dbReference type="Rhea" id="RHEA-COMP:9679"/>
        <dbReference type="Rhea" id="RHEA-COMP:9719"/>
        <dbReference type="ChEBI" id="CHEBI:15378"/>
        <dbReference type="ChEBI" id="CHEBI:29919"/>
        <dbReference type="ChEBI" id="CHEBI:43474"/>
        <dbReference type="ChEBI" id="CHEBI:78517"/>
        <dbReference type="ChEBI" id="CHEBI:78551"/>
        <dbReference type="EC" id="2.5.1.73"/>
    </reaction>
</comment>
<comment type="cofactor">
    <cofactor evidence="1">
        <name>pyridoxal 5'-phosphate</name>
        <dbReference type="ChEBI" id="CHEBI:597326"/>
    </cofactor>
</comment>
<comment type="subunit">
    <text evidence="1">Homodimer. Interacts with SepRS.</text>
</comment>
<comment type="similarity">
    <text evidence="1">Belongs to the SepCysS family.</text>
</comment>
<sequence length="392" mass="44252">MNLDRYRNIVRETERKYINVNPIQRGGVLTPEARKALLEFGDGYSVCDFCEGLLHEIEKPPIRQFHEDLAEFLGMDVVRITAGARYAKEAVMSALCEEGDVVVADSLAHYTTFVAAEKAGATVREVPNTGHPEYKVKVDEYARVIDEVEDERGDPPALALLTHVDSEYGNLADAEKFVKICRKKGVPALLNCAYTMGRMDLSNLSPKPDFMVGSGHKGMAACAPCGVLAMREEWEEEVLRGSSLRGDVSGREWPHKEVEMLGCTVMGAPIVTMMASFPHVVERVKRWKEEVRKTRWFVKEMERIEGVRQLGERPKRHDLVKFETPGFHEVAEDHPRRGYFLYEELKKRGVIGIQPGQTETIKASVYGLTDEQVEHVVRAFHEIAEEYGLEVS</sequence>
<gene>
    <name type="ordered locus">MK0229</name>
</gene>
<reference key="1">
    <citation type="journal article" date="2002" name="Proc. Natl. Acad. Sci. U.S.A.">
        <title>The complete genome of hyperthermophile Methanopyrus kandleri AV19 and monophyly of archaeal methanogens.</title>
        <authorList>
            <person name="Slesarev A.I."/>
            <person name="Mezhevaya K.V."/>
            <person name="Makarova K.S."/>
            <person name="Polushin N.N."/>
            <person name="Shcherbinina O.V."/>
            <person name="Shakhova V.V."/>
            <person name="Belova G.I."/>
            <person name="Aravind L."/>
            <person name="Natale D.A."/>
            <person name="Rogozin I.B."/>
            <person name="Tatusov R.L."/>
            <person name="Wolf Y.I."/>
            <person name="Stetter K.O."/>
            <person name="Malykh A.G."/>
            <person name="Koonin E.V."/>
            <person name="Kozyavkin S.A."/>
        </authorList>
    </citation>
    <scope>NUCLEOTIDE SEQUENCE [LARGE SCALE GENOMIC DNA]</scope>
    <source>
        <strain>AV19 / DSM 6324 / JCM 9639 / NBRC 100938</strain>
    </source>
</reference>
<feature type="chain" id="PRO_0000359456" description="O-phospho-L-seryl-tRNA:Cys-tRNA synthase">
    <location>
        <begin position="1"/>
        <end position="392"/>
    </location>
</feature>
<feature type="binding site" evidence="1">
    <location>
        <begin position="84"/>
        <end position="85"/>
    </location>
    <ligand>
        <name>pyridoxal 5'-phosphate</name>
        <dbReference type="ChEBI" id="CHEBI:597326"/>
    </ligand>
</feature>
<feature type="binding site" evidence="1">
    <location>
        <position position="191"/>
    </location>
    <ligand>
        <name>pyridoxal 5'-phosphate</name>
        <dbReference type="ChEBI" id="CHEBI:597326"/>
    </ligand>
</feature>
<feature type="binding site" evidence="1">
    <location>
        <begin position="214"/>
        <end position="216"/>
    </location>
    <ligand>
        <name>pyridoxal 5'-phosphate</name>
        <dbReference type="ChEBI" id="CHEBI:597326"/>
    </ligand>
</feature>
<feature type="modified residue" description="N6-(pyridoxal phosphate)lysine" evidence="1">
    <location>
        <position position="217"/>
    </location>
</feature>
<name>SPSS_METKA</name>
<keyword id="KW-0648">Protein biosynthesis</keyword>
<keyword id="KW-0663">Pyridoxal phosphate</keyword>
<keyword id="KW-1185">Reference proteome</keyword>
<keyword id="KW-0808">Transferase</keyword>
<accession>Q8TYR3</accession>
<evidence type="ECO:0000255" key="1">
    <source>
        <dbReference type="HAMAP-Rule" id="MF_01675"/>
    </source>
</evidence>
<organism>
    <name type="scientific">Methanopyrus kandleri (strain AV19 / DSM 6324 / JCM 9639 / NBRC 100938)</name>
    <dbReference type="NCBI Taxonomy" id="190192"/>
    <lineage>
        <taxon>Archaea</taxon>
        <taxon>Methanobacteriati</taxon>
        <taxon>Methanobacteriota</taxon>
        <taxon>Methanomada group</taxon>
        <taxon>Methanopyri</taxon>
        <taxon>Methanopyrales</taxon>
        <taxon>Methanopyraceae</taxon>
        <taxon>Methanopyrus</taxon>
    </lineage>
</organism>